<organism>
    <name type="scientific">Escherichia coli O157:H7</name>
    <dbReference type="NCBI Taxonomy" id="83334"/>
    <lineage>
        <taxon>Bacteria</taxon>
        <taxon>Pseudomonadati</taxon>
        <taxon>Pseudomonadota</taxon>
        <taxon>Gammaproteobacteria</taxon>
        <taxon>Enterobacterales</taxon>
        <taxon>Enterobacteriaceae</taxon>
        <taxon>Escherichia</taxon>
    </lineage>
</organism>
<reference key="1">
    <citation type="journal article" date="2001" name="Nature">
        <title>Genome sequence of enterohaemorrhagic Escherichia coli O157:H7.</title>
        <authorList>
            <person name="Perna N.T."/>
            <person name="Plunkett G. III"/>
            <person name="Burland V."/>
            <person name="Mau B."/>
            <person name="Glasner J.D."/>
            <person name="Rose D.J."/>
            <person name="Mayhew G.F."/>
            <person name="Evans P.S."/>
            <person name="Gregor J."/>
            <person name="Kirkpatrick H.A."/>
            <person name="Posfai G."/>
            <person name="Hackett J."/>
            <person name="Klink S."/>
            <person name="Boutin A."/>
            <person name="Shao Y."/>
            <person name="Miller L."/>
            <person name="Grotbeck E.J."/>
            <person name="Davis N.W."/>
            <person name="Lim A."/>
            <person name="Dimalanta E.T."/>
            <person name="Potamousis K."/>
            <person name="Apodaca J."/>
            <person name="Anantharaman T.S."/>
            <person name="Lin J."/>
            <person name="Yen G."/>
            <person name="Schwartz D.C."/>
            <person name="Welch R.A."/>
            <person name="Blattner F.R."/>
        </authorList>
    </citation>
    <scope>NUCLEOTIDE SEQUENCE [LARGE SCALE GENOMIC DNA]</scope>
    <source>
        <strain>O157:H7 / EDL933 / ATCC 700927 / EHEC</strain>
    </source>
</reference>
<reference key="2">
    <citation type="journal article" date="2001" name="DNA Res.">
        <title>Complete genome sequence of enterohemorrhagic Escherichia coli O157:H7 and genomic comparison with a laboratory strain K-12.</title>
        <authorList>
            <person name="Hayashi T."/>
            <person name="Makino K."/>
            <person name="Ohnishi M."/>
            <person name="Kurokawa K."/>
            <person name="Ishii K."/>
            <person name="Yokoyama K."/>
            <person name="Han C.-G."/>
            <person name="Ohtsubo E."/>
            <person name="Nakayama K."/>
            <person name="Murata T."/>
            <person name="Tanaka M."/>
            <person name="Tobe T."/>
            <person name="Iida T."/>
            <person name="Takami H."/>
            <person name="Honda T."/>
            <person name="Sasakawa C."/>
            <person name="Ogasawara N."/>
            <person name="Yasunaga T."/>
            <person name="Kuhara S."/>
            <person name="Shiba T."/>
            <person name="Hattori M."/>
            <person name="Shinagawa H."/>
        </authorList>
    </citation>
    <scope>NUCLEOTIDE SEQUENCE [LARGE SCALE GENOMIC DNA]</scope>
    <source>
        <strain>O157:H7 / Sakai / RIMD 0509952 / EHEC</strain>
    </source>
</reference>
<accession>Q8X7Y4</accession>
<feature type="initiator methionine" description="Removed" evidence="1">
    <location>
        <position position="1"/>
    </location>
</feature>
<feature type="chain" id="PRO_0000075574" description="2-C-methyl-D-erythritol 4-phosphate cytidylyltransferase">
    <location>
        <begin position="2"/>
        <end position="236"/>
    </location>
</feature>
<feature type="site" description="Transition state stabilizer" evidence="2">
    <location>
        <position position="20"/>
    </location>
</feature>
<feature type="site" description="Transition state stabilizer" evidence="2">
    <location>
        <position position="27"/>
    </location>
</feature>
<feature type="site" description="Positions MEP for the nucleophilic attack" evidence="2">
    <location>
        <position position="157"/>
    </location>
</feature>
<feature type="site" description="Positions MEP for the nucleophilic attack" evidence="2">
    <location>
        <position position="213"/>
    </location>
</feature>
<comment type="function">
    <text evidence="2">Catalyzes the formation of 4-diphosphocytidyl-2-C-methyl-D-erythritol from CTP and 2-C-methyl-D-erythritol 4-phosphate (MEP).</text>
</comment>
<comment type="catalytic activity">
    <reaction evidence="2">
        <text>2-C-methyl-D-erythritol 4-phosphate + CTP + H(+) = 4-CDP-2-C-methyl-D-erythritol + diphosphate</text>
        <dbReference type="Rhea" id="RHEA:13429"/>
        <dbReference type="ChEBI" id="CHEBI:15378"/>
        <dbReference type="ChEBI" id="CHEBI:33019"/>
        <dbReference type="ChEBI" id="CHEBI:37563"/>
        <dbReference type="ChEBI" id="CHEBI:57823"/>
        <dbReference type="ChEBI" id="CHEBI:58262"/>
        <dbReference type="EC" id="2.7.7.60"/>
    </reaction>
</comment>
<comment type="pathway">
    <text evidence="2">Isoprenoid biosynthesis; isopentenyl diphosphate biosynthesis via DXP pathway; isopentenyl diphosphate from 1-deoxy-D-xylulose 5-phosphate: step 2/6.</text>
</comment>
<comment type="subunit">
    <text evidence="2">Homodimer.</text>
</comment>
<comment type="similarity">
    <text evidence="2">Belongs to the IspD/TarI cytidylyltransferase family. IspD subfamily.</text>
</comment>
<name>ISPD_ECO57</name>
<protein>
    <recommendedName>
        <fullName evidence="2">2-C-methyl-D-erythritol 4-phosphate cytidylyltransferase</fullName>
        <ecNumber evidence="2">2.7.7.60</ecNumber>
    </recommendedName>
    <alternativeName>
        <fullName evidence="2">4-diphosphocytidyl-2C-methyl-D-erythritol synthase</fullName>
    </alternativeName>
    <alternativeName>
        <fullName evidence="2">MEP cytidylyltransferase</fullName>
        <shortName evidence="2">MCT</shortName>
    </alternativeName>
</protein>
<proteinExistence type="inferred from homology"/>
<dbReference type="EC" id="2.7.7.60" evidence="2"/>
<dbReference type="EMBL" id="AE005174">
    <property type="protein sequence ID" value="AAG57854.1"/>
    <property type="molecule type" value="Genomic_DNA"/>
</dbReference>
<dbReference type="EMBL" id="BA000007">
    <property type="protein sequence ID" value="BAB37024.1"/>
    <property type="molecule type" value="Genomic_DNA"/>
</dbReference>
<dbReference type="PIR" id="A91079">
    <property type="entry name" value="A91079"/>
</dbReference>
<dbReference type="PIR" id="B85924">
    <property type="entry name" value="B85924"/>
</dbReference>
<dbReference type="RefSeq" id="NP_311628.1">
    <property type="nucleotide sequence ID" value="NC_002695.1"/>
</dbReference>
<dbReference type="RefSeq" id="WP_000246158.1">
    <property type="nucleotide sequence ID" value="NZ_VOAI01000003.1"/>
</dbReference>
<dbReference type="SMR" id="Q8X7Y4"/>
<dbReference type="STRING" id="155864.Z4055"/>
<dbReference type="GeneID" id="914677"/>
<dbReference type="KEGG" id="ece:Z4055"/>
<dbReference type="KEGG" id="ecs:ECs_3601"/>
<dbReference type="PATRIC" id="fig|386585.9.peg.3764"/>
<dbReference type="eggNOG" id="COG1211">
    <property type="taxonomic scope" value="Bacteria"/>
</dbReference>
<dbReference type="HOGENOM" id="CLU_061281_3_1_6"/>
<dbReference type="OMA" id="TPMLIHA"/>
<dbReference type="SABIO-RK" id="Q8X7Y4"/>
<dbReference type="UniPathway" id="UPA00056">
    <property type="reaction ID" value="UER00093"/>
</dbReference>
<dbReference type="Proteomes" id="UP000000558">
    <property type="component" value="Chromosome"/>
</dbReference>
<dbReference type="Proteomes" id="UP000002519">
    <property type="component" value="Chromosome"/>
</dbReference>
<dbReference type="GO" id="GO:0050518">
    <property type="term" value="F:2-C-methyl-D-erythritol 4-phosphate cytidylyltransferase activity"/>
    <property type="evidence" value="ECO:0007669"/>
    <property type="project" value="UniProtKB-UniRule"/>
</dbReference>
<dbReference type="GO" id="GO:0019288">
    <property type="term" value="P:isopentenyl diphosphate biosynthetic process, methylerythritol 4-phosphate pathway"/>
    <property type="evidence" value="ECO:0007669"/>
    <property type="project" value="UniProtKB-UniRule"/>
</dbReference>
<dbReference type="CDD" id="cd02516">
    <property type="entry name" value="CDP-ME_synthetase"/>
    <property type="match status" value="1"/>
</dbReference>
<dbReference type="FunFam" id="3.90.550.10:FF:000003">
    <property type="entry name" value="2-C-methyl-D-erythritol 4-phosphate cytidylyltransferase"/>
    <property type="match status" value="1"/>
</dbReference>
<dbReference type="Gene3D" id="3.90.550.10">
    <property type="entry name" value="Spore Coat Polysaccharide Biosynthesis Protein SpsA, Chain A"/>
    <property type="match status" value="1"/>
</dbReference>
<dbReference type="HAMAP" id="MF_00108">
    <property type="entry name" value="IspD"/>
    <property type="match status" value="1"/>
</dbReference>
<dbReference type="InterPro" id="IPR001228">
    <property type="entry name" value="IspD"/>
</dbReference>
<dbReference type="InterPro" id="IPR034683">
    <property type="entry name" value="IspD/TarI"/>
</dbReference>
<dbReference type="InterPro" id="IPR050088">
    <property type="entry name" value="IspD/TarI_cytidylyltransf_bact"/>
</dbReference>
<dbReference type="InterPro" id="IPR018294">
    <property type="entry name" value="ISPD_synthase_CS"/>
</dbReference>
<dbReference type="InterPro" id="IPR029044">
    <property type="entry name" value="Nucleotide-diphossugar_trans"/>
</dbReference>
<dbReference type="NCBIfam" id="TIGR00453">
    <property type="entry name" value="ispD"/>
    <property type="match status" value="1"/>
</dbReference>
<dbReference type="PANTHER" id="PTHR32125">
    <property type="entry name" value="2-C-METHYL-D-ERYTHRITOL 4-PHOSPHATE CYTIDYLYLTRANSFERASE, CHLOROPLASTIC"/>
    <property type="match status" value="1"/>
</dbReference>
<dbReference type="PANTHER" id="PTHR32125:SF4">
    <property type="entry name" value="2-C-METHYL-D-ERYTHRITOL 4-PHOSPHATE CYTIDYLYLTRANSFERASE, CHLOROPLASTIC"/>
    <property type="match status" value="1"/>
</dbReference>
<dbReference type="Pfam" id="PF01128">
    <property type="entry name" value="IspD"/>
    <property type="match status" value="1"/>
</dbReference>
<dbReference type="SUPFAM" id="SSF53448">
    <property type="entry name" value="Nucleotide-diphospho-sugar transferases"/>
    <property type="match status" value="1"/>
</dbReference>
<dbReference type="PROSITE" id="PS01295">
    <property type="entry name" value="ISPD"/>
    <property type="match status" value="1"/>
</dbReference>
<keyword id="KW-0414">Isoprene biosynthesis</keyword>
<keyword id="KW-0548">Nucleotidyltransferase</keyword>
<keyword id="KW-1185">Reference proteome</keyword>
<keyword id="KW-0808">Transferase</keyword>
<evidence type="ECO:0000250" key="1"/>
<evidence type="ECO:0000255" key="2">
    <source>
        <dbReference type="HAMAP-Rule" id="MF_00108"/>
    </source>
</evidence>
<gene>
    <name evidence="2" type="primary">ispD</name>
    <name type="ordered locus">Z4055</name>
    <name type="ordered locus">ECs3601</name>
</gene>
<sequence length="236" mass="25733">MATTHLDVCAVVPAAGFGRRMQTECPKQYLSIGNQTILEHSVYALLAHPRVKRVVIAISPGDSRFAQLPLANHPQITVVDGGDERADSVLAGLKAAGDAQWVLVHDAARPCLHQDDLARLLALSETSRTGGILAAPVRDTMKRAEPGKNAIAHTVDRNGLWHALTPQFFPRELLHDCLTRALNEGAAITDEASALEYCGFHPQLVEGRADNIKVTRPEDLALAEFYLTRTIHQENT</sequence>